<keyword id="KW-0426">Late protein</keyword>
<keyword id="KW-0231">Viral genome packaging</keyword>
<keyword id="KW-1188">Viral release from host cell</keyword>
<name>PRTP_HHV2</name>
<organismHost>
    <name type="scientific">Homo sapiens</name>
    <name type="common">Human</name>
    <dbReference type="NCBI Taxonomy" id="9606"/>
</organismHost>
<accession>P36385</accession>
<protein>
    <recommendedName>
        <fullName>Processing and transport protein</fullName>
    </recommendedName>
    <alternativeName>
        <fullName>Infected cell protein 18.5</fullName>
        <shortName>ICP18.5 protein</shortName>
    </alternativeName>
</protein>
<dbReference type="SMR" id="P36385"/>
<dbReference type="GO" id="GO:0019073">
    <property type="term" value="P:viral DNA genome packaging"/>
    <property type="evidence" value="ECO:0007669"/>
    <property type="project" value="InterPro"/>
</dbReference>
<dbReference type="InterPro" id="IPR000501">
    <property type="entry name" value="UL28/UL56"/>
</dbReference>
<dbReference type="Pfam" id="PF01366">
    <property type="entry name" value="PRTP"/>
    <property type="match status" value="1"/>
</dbReference>
<gene>
    <name type="primary">UL28</name>
</gene>
<reference key="1">
    <citation type="journal article" date="1993" name="Arch. Virol.">
        <title>Nucleotide sequence of the major DNA-binding protein gene of herpes simplex virus type 2 and a comparison with the type 1.</title>
        <authorList>
            <person name="Toh Y."/>
            <person name="Liu Y."/>
            <person name="Tanaka S."/>
            <person name="Mori R."/>
        </authorList>
    </citation>
    <scope>NUCLEOTIDE SEQUENCE</scope>
</reference>
<evidence type="ECO:0000305" key="1"/>
<sequence length="246" mass="27246">MAAAPPAAVSEPTAARQKLLALLGQVQTYVFQLELLRRCDPQIGLGKLAQLKLNALQVRVLRRHLRPGLEAQAAAFLTPLSVTLELLLEYAWREGERLLGHLDTFATTGDVSAFFTETMGLARPCPYHQQIRLETYGGDVRMELCFLHDVENFLKQLNYCHLTTPPSGATAALERVREFMVAAVGSGLIVPPELSDPSHPCAVCFEELCVTANQGATIARRLADRICNHVTQQAQVRLDANELRRY</sequence>
<comment type="function">
    <text>This protein may affect translocation of the virus glycoproteins to membranes. It is involved in capsid maturation.</text>
</comment>
<comment type="similarity">
    <text evidence="1">Belongs to the herpesviridae PRTP family.</text>
</comment>
<feature type="chain" id="PRO_0000115877" description="Processing and transport protein">
    <location>
        <begin position="1"/>
        <end position="246" status="greater than"/>
    </location>
</feature>
<feature type="non-terminal residue">
    <location>
        <position position="246"/>
    </location>
</feature>
<proteinExistence type="inferred from homology"/>
<organism>
    <name type="scientific">Human herpesvirus 2</name>
    <name type="common">HHV-2</name>
    <name type="synonym">Human herpes simplex virus 2</name>
    <dbReference type="NCBI Taxonomy" id="10310"/>
    <lineage>
        <taxon>Viruses</taxon>
        <taxon>Duplodnaviria</taxon>
        <taxon>Heunggongvirae</taxon>
        <taxon>Peploviricota</taxon>
        <taxon>Herviviricetes</taxon>
        <taxon>Herpesvirales</taxon>
        <taxon>Orthoherpesviridae</taxon>
        <taxon>Alphaherpesvirinae</taxon>
        <taxon>Simplexvirus</taxon>
        <taxon>Simplexvirus humanalpha2</taxon>
    </lineage>
</organism>